<sequence>MLYSSRGDPEGQPLLLSLLILAMWVVGSGQLHYSVPEEAKHGTFVGRIAQDLGLELAELVPRLFQLDSKGRGDLLEVNLQNGILFVNSRIDREELCGRSAECSIHLEVIVDRPLQVFHVDVEVKDINDNPPVFPATQKNLFIAESRPLDSRFPLEGASDADIGENALLTYRLSPNEYFFLDVPTSNQQVKPLGLVLRKLLDREETPELHLLLTATDGGKPELTGTVQLLITVLDNNDNAPVFDRTLYTVKLPENVSIGTLVIHPNASDLDEGLNGDIIYSFSSDVSPDIKSKFHMDPLSGAITVIGHMDFEESRAHKIPVEAVDKGFPPLAGHCTVLVEVVDVNDNAPQLTIKTLSVPVKEDAQLGTVIALISVTDLDADANGQVTCSLTPHVPFKLVSTYKNYYSLVLDRALDRESVSAYELVVTARDGGSPSLWATARVSVEVADVNDNAPAFAQPEYTVFVKENNPPGCHIFTVSARDADAQENALVSYSLVERRLGERSLWSYVSVHAESGKVYALQPLDHEELELLQFQVSARDAGVPPLGSNVTLQVFVLDENDNAPALLTPRMRGTDGAVSEMVLRSVGAGVVVGKVLAVDADSGYNAWLSYELQPETASASIPFRVGLYTGEISTTRALDETDAPRQRLLVLVKDHGEPALTATATVLVSLVESGQAPKSSSRASVGATGPEVTLVDVNVYLIIAICAVSSLLVLTLLLYTVLRCSAMPTEGECAPGKPTLVCSSAVGSWSYSQQRRQRVCSGEGPQKTDLMAFSPGLSPCAGSTERTGEPSASSDSSGKPRQPNPDWRYSASLRAGMHSSVHLEEAGILRAGPGGPDQQWPTVSSATPEPEAGEVSPPVGAGVNSNSWTFKYGPGNPKQSGPGELPDKFIIPGSPAIISIRQEPANSQIDKSDFITFGKKEETKKKKKKKKGNKTQEKKEKGNSTTDNSDQ</sequence>
<reference key="1">
    <citation type="journal article" date="2005" name="Nature">
        <title>Initial sequence of the chimpanzee genome and comparison with the human genome.</title>
        <authorList>
            <consortium name="Chimpanzee sequencing and analysis consortium"/>
        </authorList>
    </citation>
    <scope>NUCLEOTIDE SEQUENCE [LARGE SCALE GENOMIC DNA]</scope>
</reference>
<reference key="2">
    <citation type="journal article" date="2005" name="Genetics">
        <title>Comparative genomics and diversifying selection of the clustered vertebrate protocadherin genes.</title>
        <authorList>
            <person name="Wu Q."/>
        </authorList>
    </citation>
    <scope>IDENTIFICATION</scope>
</reference>
<organism>
    <name type="scientific">Pan troglodytes</name>
    <name type="common">Chimpanzee</name>
    <dbReference type="NCBI Taxonomy" id="9598"/>
    <lineage>
        <taxon>Eukaryota</taxon>
        <taxon>Metazoa</taxon>
        <taxon>Chordata</taxon>
        <taxon>Craniata</taxon>
        <taxon>Vertebrata</taxon>
        <taxon>Euteleostomi</taxon>
        <taxon>Mammalia</taxon>
        <taxon>Eutheria</taxon>
        <taxon>Euarchontoglires</taxon>
        <taxon>Primates</taxon>
        <taxon>Haplorrhini</taxon>
        <taxon>Catarrhini</taxon>
        <taxon>Hominidae</taxon>
        <taxon>Pan</taxon>
    </lineage>
</organism>
<accession>Q5DRE3</accession>
<proteinExistence type="inferred from homology"/>
<protein>
    <recommendedName>
        <fullName>Protocadherin alpha-9</fullName>
        <shortName>PCDH-alpha-9</shortName>
    </recommendedName>
</protein>
<gene>
    <name type="primary">PCDHA9</name>
</gene>
<comment type="function">
    <text>Potential calcium-dependent cell-adhesion protein. May be involved in the establishment and maintenance of specific neuronal connections in the brain.</text>
</comment>
<comment type="subcellular location">
    <subcellularLocation>
        <location evidence="1">Cell membrane</location>
        <topology evidence="1">Single-pass type I membrane protein</topology>
    </subcellularLocation>
</comment>
<keyword id="KW-0106">Calcium</keyword>
<keyword id="KW-0130">Cell adhesion</keyword>
<keyword id="KW-1003">Cell membrane</keyword>
<keyword id="KW-0325">Glycoprotein</keyword>
<keyword id="KW-0472">Membrane</keyword>
<keyword id="KW-1185">Reference proteome</keyword>
<keyword id="KW-0677">Repeat</keyword>
<keyword id="KW-0732">Signal</keyword>
<keyword id="KW-0812">Transmembrane</keyword>
<keyword id="KW-1133">Transmembrane helix</keyword>
<feature type="signal peptide" evidence="2">
    <location>
        <begin position="1"/>
        <end position="29"/>
    </location>
</feature>
<feature type="chain" id="PRO_0000003901" description="Protocadherin alpha-9">
    <location>
        <begin position="30"/>
        <end position="950"/>
    </location>
</feature>
<feature type="topological domain" description="Extracellular" evidence="2">
    <location>
        <begin position="30"/>
        <end position="697"/>
    </location>
</feature>
<feature type="transmembrane region" description="Helical" evidence="2">
    <location>
        <begin position="698"/>
        <end position="718"/>
    </location>
</feature>
<feature type="topological domain" description="Cytoplasmic" evidence="2">
    <location>
        <begin position="719"/>
        <end position="950"/>
    </location>
</feature>
<feature type="domain" description="Cadherin 1" evidence="3">
    <location>
        <begin position="30"/>
        <end position="133"/>
    </location>
</feature>
<feature type="domain" description="Cadherin 2" evidence="3">
    <location>
        <begin position="134"/>
        <end position="242"/>
    </location>
</feature>
<feature type="domain" description="Cadherin 3" evidence="3">
    <location>
        <begin position="243"/>
        <end position="350"/>
    </location>
</feature>
<feature type="domain" description="Cadherin 4" evidence="3">
    <location>
        <begin position="351"/>
        <end position="455"/>
    </location>
</feature>
<feature type="domain" description="Cadherin 5" evidence="3">
    <location>
        <begin position="456"/>
        <end position="565"/>
    </location>
</feature>
<feature type="domain" description="Cadherin 6" evidence="3">
    <location>
        <begin position="588"/>
        <end position="678"/>
    </location>
</feature>
<feature type="repeat" description="PXXP 1">
    <location>
        <begin position="734"/>
        <end position="737"/>
    </location>
</feature>
<feature type="repeat" description="PXXP 2">
    <location>
        <begin position="799"/>
        <end position="802"/>
    </location>
</feature>
<feature type="repeat" description="PXXP 3">
    <location>
        <begin position="832"/>
        <end position="835"/>
    </location>
</feature>
<feature type="repeat" description="PXXP 4">
    <location>
        <begin position="873"/>
        <end position="876"/>
    </location>
</feature>
<feature type="repeat" description="PXXP 5">
    <location>
        <begin position="891"/>
        <end position="894"/>
    </location>
</feature>
<feature type="region of interest" description="5 X 4 AA repeats of P-X-X-P">
    <location>
        <begin position="734"/>
        <end position="894"/>
    </location>
</feature>
<feature type="region of interest" description="Disordered" evidence="4">
    <location>
        <begin position="759"/>
        <end position="808"/>
    </location>
</feature>
<feature type="region of interest" description="Disordered" evidence="4">
    <location>
        <begin position="827"/>
        <end position="950"/>
    </location>
</feature>
<feature type="compositionally biased region" description="Polar residues" evidence="4">
    <location>
        <begin position="789"/>
        <end position="798"/>
    </location>
</feature>
<feature type="compositionally biased region" description="Basic and acidic residues" evidence="4">
    <location>
        <begin position="909"/>
        <end position="923"/>
    </location>
</feature>
<feature type="glycosylation site" description="N-linked (GlcNAc...) asparagine" evidence="2">
    <location>
        <position position="254"/>
    </location>
</feature>
<feature type="glycosylation site" description="N-linked (GlcNAc...) asparagine" evidence="2">
    <location>
        <position position="265"/>
    </location>
</feature>
<feature type="glycosylation site" description="N-linked (GlcNAc...) asparagine" evidence="2">
    <location>
        <position position="548"/>
    </location>
</feature>
<evidence type="ECO:0000250" key="1"/>
<evidence type="ECO:0000255" key="2"/>
<evidence type="ECO:0000255" key="3">
    <source>
        <dbReference type="PROSITE-ProRule" id="PRU00043"/>
    </source>
</evidence>
<evidence type="ECO:0000256" key="4">
    <source>
        <dbReference type="SAM" id="MobiDB-lite"/>
    </source>
</evidence>
<dbReference type="RefSeq" id="NP_001076056.1">
    <property type="nucleotide sequence ID" value="NM_001082587.2"/>
</dbReference>
<dbReference type="SMR" id="Q5DRE3"/>
<dbReference type="FunCoup" id="Q5DRE3">
    <property type="interactions" value="54"/>
</dbReference>
<dbReference type="GlyCosmos" id="Q5DRE3">
    <property type="glycosylation" value="3 sites, No reported glycans"/>
</dbReference>
<dbReference type="Ensembl" id="ENSPTRT00000064777.3">
    <property type="protein sequence ID" value="ENSPTRP00000056340.3"/>
    <property type="gene ID" value="ENSPTRG00000017328.7"/>
</dbReference>
<dbReference type="GeneID" id="100034716"/>
<dbReference type="KEGG" id="ptr:100034716"/>
<dbReference type="CTD" id="9752"/>
<dbReference type="GeneTree" id="ENSGT00940000160554"/>
<dbReference type="HOGENOM" id="CLU_006480_0_1_1"/>
<dbReference type="InParanoid" id="Q5DRE3"/>
<dbReference type="Proteomes" id="UP000002277">
    <property type="component" value="Chromosome 5"/>
</dbReference>
<dbReference type="Bgee" id="ENSPTRG00000017328">
    <property type="expression patterns" value="Expressed in cerebellum and 18 other cell types or tissues"/>
</dbReference>
<dbReference type="GO" id="GO:0005886">
    <property type="term" value="C:plasma membrane"/>
    <property type="evidence" value="ECO:0007669"/>
    <property type="project" value="UniProtKB-SubCell"/>
</dbReference>
<dbReference type="GO" id="GO:0005509">
    <property type="term" value="F:calcium ion binding"/>
    <property type="evidence" value="ECO:0007669"/>
    <property type="project" value="InterPro"/>
</dbReference>
<dbReference type="GO" id="GO:0007156">
    <property type="term" value="P:homophilic cell adhesion via plasma membrane adhesion molecules"/>
    <property type="evidence" value="ECO:0007669"/>
    <property type="project" value="InterPro"/>
</dbReference>
<dbReference type="GO" id="GO:0007399">
    <property type="term" value="P:nervous system development"/>
    <property type="evidence" value="ECO:0007669"/>
    <property type="project" value="UniProtKB-ARBA"/>
</dbReference>
<dbReference type="CDD" id="cd11304">
    <property type="entry name" value="Cadherin_repeat"/>
    <property type="match status" value="6"/>
</dbReference>
<dbReference type="FunFam" id="2.60.40.60:FF:000001">
    <property type="entry name" value="Protocadherin alpha 2"/>
    <property type="match status" value="1"/>
</dbReference>
<dbReference type="FunFam" id="2.60.40.60:FF:000002">
    <property type="entry name" value="Protocadherin alpha 2"/>
    <property type="match status" value="1"/>
</dbReference>
<dbReference type="FunFam" id="2.60.40.60:FF:000003">
    <property type="entry name" value="Protocadherin alpha 2"/>
    <property type="match status" value="1"/>
</dbReference>
<dbReference type="FunFam" id="2.60.40.60:FF:000006">
    <property type="entry name" value="Protocadherin alpha 2"/>
    <property type="match status" value="1"/>
</dbReference>
<dbReference type="FunFam" id="2.60.40.60:FF:000007">
    <property type="entry name" value="Protocadherin alpha 2"/>
    <property type="match status" value="1"/>
</dbReference>
<dbReference type="FunFam" id="2.60.40.60:FF:000076">
    <property type="entry name" value="Protocadherin alpha 2"/>
    <property type="match status" value="1"/>
</dbReference>
<dbReference type="Gene3D" id="2.60.40.60">
    <property type="entry name" value="Cadherins"/>
    <property type="match status" value="6"/>
</dbReference>
<dbReference type="InterPro" id="IPR002126">
    <property type="entry name" value="Cadherin-like_dom"/>
</dbReference>
<dbReference type="InterPro" id="IPR015919">
    <property type="entry name" value="Cadherin-like_sf"/>
</dbReference>
<dbReference type="InterPro" id="IPR031904">
    <property type="entry name" value="Cadherin_CBD"/>
</dbReference>
<dbReference type="InterPro" id="IPR020894">
    <property type="entry name" value="Cadherin_CS"/>
</dbReference>
<dbReference type="InterPro" id="IPR013164">
    <property type="entry name" value="Cadherin_N"/>
</dbReference>
<dbReference type="InterPro" id="IPR050174">
    <property type="entry name" value="Protocadherin/Cadherin-CA"/>
</dbReference>
<dbReference type="PANTHER" id="PTHR24028">
    <property type="entry name" value="CADHERIN-87A"/>
    <property type="match status" value="1"/>
</dbReference>
<dbReference type="PANTHER" id="PTHR24028:SF255">
    <property type="entry name" value="PROTOCADHERIN ALPHA-9"/>
    <property type="match status" value="1"/>
</dbReference>
<dbReference type="Pfam" id="PF00028">
    <property type="entry name" value="Cadherin"/>
    <property type="match status" value="5"/>
</dbReference>
<dbReference type="Pfam" id="PF08266">
    <property type="entry name" value="Cadherin_2"/>
    <property type="match status" value="1"/>
</dbReference>
<dbReference type="Pfam" id="PF15974">
    <property type="entry name" value="Cadherin_tail"/>
    <property type="match status" value="1"/>
</dbReference>
<dbReference type="PRINTS" id="PR00205">
    <property type="entry name" value="CADHERIN"/>
</dbReference>
<dbReference type="SMART" id="SM00112">
    <property type="entry name" value="CA"/>
    <property type="match status" value="6"/>
</dbReference>
<dbReference type="SUPFAM" id="SSF49313">
    <property type="entry name" value="Cadherin-like"/>
    <property type="match status" value="6"/>
</dbReference>
<dbReference type="PROSITE" id="PS00232">
    <property type="entry name" value="CADHERIN_1"/>
    <property type="match status" value="5"/>
</dbReference>
<dbReference type="PROSITE" id="PS50268">
    <property type="entry name" value="CADHERIN_2"/>
    <property type="match status" value="6"/>
</dbReference>
<name>PCDA9_PANTR</name>